<protein>
    <recommendedName>
        <fullName>Beta-glucosidase 25</fullName>
        <shortName>Os6bglu25</shortName>
        <ecNumber evidence="2">3.2.1.21</ecNumber>
    </recommendedName>
</protein>
<reference key="1">
    <citation type="journal article" date="2005" name="Nature">
        <title>The map-based sequence of the rice genome.</title>
        <authorList>
            <consortium name="International rice genome sequencing project (IRGSP)"/>
        </authorList>
    </citation>
    <scope>NUCLEOTIDE SEQUENCE [LARGE SCALE GENOMIC DNA]</scope>
    <source>
        <strain>cv. Nipponbare</strain>
    </source>
</reference>
<reference key="2">
    <citation type="journal article" date="2008" name="Nucleic Acids Res.">
        <title>The rice annotation project database (RAP-DB): 2008 update.</title>
        <authorList>
            <consortium name="The rice annotation project (RAP)"/>
        </authorList>
    </citation>
    <scope>GENOME REANNOTATION</scope>
    <source>
        <strain>cv. Nipponbare</strain>
    </source>
</reference>
<reference key="3">
    <citation type="journal article" date="2013" name="Rice">
        <title>Improvement of the Oryza sativa Nipponbare reference genome using next generation sequence and optical map data.</title>
        <authorList>
            <person name="Kawahara Y."/>
            <person name="de la Bastide M."/>
            <person name="Hamilton J.P."/>
            <person name="Kanamori H."/>
            <person name="McCombie W.R."/>
            <person name="Ouyang S."/>
            <person name="Schwartz D.C."/>
            <person name="Tanaka T."/>
            <person name="Wu J."/>
            <person name="Zhou S."/>
            <person name="Childs K.L."/>
            <person name="Davidson R.M."/>
            <person name="Lin H."/>
            <person name="Quesada-Ocampo L."/>
            <person name="Vaillancourt B."/>
            <person name="Sakai H."/>
            <person name="Lee S.S."/>
            <person name="Kim J."/>
            <person name="Numa H."/>
            <person name="Itoh T."/>
            <person name="Buell C.R."/>
            <person name="Matsumoto T."/>
        </authorList>
    </citation>
    <scope>GENOME REANNOTATION</scope>
    <source>
        <strain>cv. Nipponbare</strain>
    </source>
</reference>
<reference key="4">
    <citation type="journal article" date="2003" name="Science">
        <title>Collection, mapping, and annotation of over 28,000 cDNA clones from japonica rice.</title>
        <authorList>
            <consortium name="The rice full-length cDNA consortium"/>
        </authorList>
    </citation>
    <scope>NUCLEOTIDE SEQUENCE [LARGE SCALE MRNA] (ISOFORM 2)</scope>
    <source>
        <strain>cv. Nipponbare</strain>
    </source>
</reference>
<reference key="5">
    <citation type="journal article" date="2006" name="BMC Plant Biol.">
        <title>Analysis of rice glycosyl hydrolase family 1 and expression of Os4bglu12 beta-glucosidase.</title>
        <authorList>
            <person name="Opassiri R."/>
            <person name="Pomthong B."/>
            <person name="Onkoksoong T."/>
            <person name="Akiyama T."/>
            <person name="Esen A."/>
            <person name="Ketudat Cairns J.R."/>
        </authorList>
    </citation>
    <scope>GENE FAMILY</scope>
    <scope>NOMENCLATURE</scope>
</reference>
<keyword id="KW-0025">Alternative splicing</keyword>
<keyword id="KW-1015">Disulfide bond</keyword>
<keyword id="KW-0325">Glycoprotein</keyword>
<keyword id="KW-0326">Glycosidase</keyword>
<keyword id="KW-0378">Hydrolase</keyword>
<keyword id="KW-1185">Reference proteome</keyword>
<keyword id="KW-0732">Signal</keyword>
<comment type="catalytic activity">
    <reaction evidence="2">
        <text>Hydrolysis of terminal, non-reducing beta-D-glucosyl residues with release of beta-D-glucose.</text>
        <dbReference type="EC" id="3.2.1.21"/>
    </reaction>
</comment>
<comment type="alternative products">
    <event type="alternative splicing"/>
    <isoform>
        <id>Q0DA21-1</id>
        <name>1</name>
        <sequence type="displayed"/>
    </isoform>
    <isoform>
        <id>Q0DA21-2</id>
        <name>2</name>
        <sequence type="described" ref="VSP_038508 VSP_038509 VSP_038510"/>
    </isoform>
</comment>
<comment type="similarity">
    <text evidence="8">Belongs to the glycosyl hydrolase 1 family.</text>
</comment>
<comment type="sequence caution" evidence="8">
    <conflict type="erroneous gene model prediction">
        <sequence resource="EMBL-CDS" id="BAF20302"/>
    </conflict>
</comment>
<organism>
    <name type="scientific">Oryza sativa subsp. japonica</name>
    <name type="common">Rice</name>
    <dbReference type="NCBI Taxonomy" id="39947"/>
    <lineage>
        <taxon>Eukaryota</taxon>
        <taxon>Viridiplantae</taxon>
        <taxon>Streptophyta</taxon>
        <taxon>Embryophyta</taxon>
        <taxon>Tracheophyta</taxon>
        <taxon>Spermatophyta</taxon>
        <taxon>Magnoliopsida</taxon>
        <taxon>Liliopsida</taxon>
        <taxon>Poales</taxon>
        <taxon>Poaceae</taxon>
        <taxon>BOP clade</taxon>
        <taxon>Oryzoideae</taxon>
        <taxon>Oryzeae</taxon>
        <taxon>Oryzinae</taxon>
        <taxon>Oryza</taxon>
        <taxon>Oryza sativa</taxon>
    </lineage>
</organism>
<dbReference type="EC" id="3.2.1.21" evidence="2"/>
<dbReference type="EMBL" id="AP008212">
    <property type="protein sequence ID" value="BAF20302.1"/>
    <property type="status" value="ALT_SEQ"/>
    <property type="molecule type" value="Genomic_DNA"/>
</dbReference>
<dbReference type="EMBL" id="AP014962">
    <property type="status" value="NOT_ANNOTATED_CDS"/>
    <property type="molecule type" value="Genomic_DNA"/>
</dbReference>
<dbReference type="EMBL" id="AK068614">
    <property type="protein sequence ID" value="BAG90993.1"/>
    <property type="molecule type" value="mRNA"/>
</dbReference>
<dbReference type="EMBL" id="AK120488">
    <property type="protein sequence ID" value="BAH00037.1"/>
    <property type="molecule type" value="mRNA"/>
</dbReference>
<dbReference type="RefSeq" id="XP_015643676.1">
    <property type="nucleotide sequence ID" value="XM_015788190.1"/>
</dbReference>
<dbReference type="SMR" id="Q0DA21"/>
<dbReference type="FunCoup" id="Q0DA21">
    <property type="interactions" value="587"/>
</dbReference>
<dbReference type="STRING" id="39947.Q0DA21"/>
<dbReference type="CAZy" id="GH1">
    <property type="family name" value="Glycoside Hydrolase Family 1"/>
</dbReference>
<dbReference type="GlyCosmos" id="Q0DA21">
    <property type="glycosylation" value="2 sites, No reported glycans"/>
</dbReference>
<dbReference type="PaxDb" id="39947-Q0DA21"/>
<dbReference type="KEGG" id="dosa:Os06g0683300"/>
<dbReference type="eggNOG" id="KOG0626">
    <property type="taxonomic scope" value="Eukaryota"/>
</dbReference>
<dbReference type="InParanoid" id="Q0DA21"/>
<dbReference type="OrthoDB" id="65569at2759"/>
<dbReference type="Proteomes" id="UP000000763">
    <property type="component" value="Chromosome 6"/>
</dbReference>
<dbReference type="Proteomes" id="UP000059680">
    <property type="component" value="Chromosome 6"/>
</dbReference>
<dbReference type="GO" id="GO:0033907">
    <property type="term" value="F:beta-D-fucosidase activity"/>
    <property type="evidence" value="ECO:0007669"/>
    <property type="project" value="UniProtKB-ARBA"/>
</dbReference>
<dbReference type="GO" id="GO:0004565">
    <property type="term" value="F:beta-galactosidase activity"/>
    <property type="evidence" value="ECO:0007669"/>
    <property type="project" value="UniProtKB-ARBA"/>
</dbReference>
<dbReference type="GO" id="GO:0008422">
    <property type="term" value="F:beta-glucosidase activity"/>
    <property type="evidence" value="ECO:0000318"/>
    <property type="project" value="GO_Central"/>
</dbReference>
<dbReference type="GO" id="GO:0005975">
    <property type="term" value="P:carbohydrate metabolic process"/>
    <property type="evidence" value="ECO:0007669"/>
    <property type="project" value="InterPro"/>
</dbReference>
<dbReference type="FunFam" id="3.20.20.80:FF:000020">
    <property type="entry name" value="Beta-glucosidase 12"/>
    <property type="match status" value="1"/>
</dbReference>
<dbReference type="Gene3D" id="3.20.20.80">
    <property type="entry name" value="Glycosidases"/>
    <property type="match status" value="1"/>
</dbReference>
<dbReference type="InterPro" id="IPR001360">
    <property type="entry name" value="Glyco_hydro_1"/>
</dbReference>
<dbReference type="InterPro" id="IPR033132">
    <property type="entry name" value="Glyco_hydro_1_N_CS"/>
</dbReference>
<dbReference type="InterPro" id="IPR017853">
    <property type="entry name" value="Glycoside_hydrolase_SF"/>
</dbReference>
<dbReference type="PANTHER" id="PTHR10353">
    <property type="entry name" value="GLYCOSYL HYDROLASE"/>
    <property type="match status" value="1"/>
</dbReference>
<dbReference type="PANTHER" id="PTHR10353:SF36">
    <property type="entry name" value="LP05116P"/>
    <property type="match status" value="1"/>
</dbReference>
<dbReference type="Pfam" id="PF00232">
    <property type="entry name" value="Glyco_hydro_1"/>
    <property type="match status" value="1"/>
</dbReference>
<dbReference type="PRINTS" id="PR00131">
    <property type="entry name" value="GLHYDRLASE1"/>
</dbReference>
<dbReference type="SUPFAM" id="SSF51445">
    <property type="entry name" value="(Trans)glycosidases"/>
    <property type="match status" value="1"/>
</dbReference>
<dbReference type="PROSITE" id="PS00653">
    <property type="entry name" value="GLYCOSYL_HYDROL_F1_2"/>
    <property type="match status" value="1"/>
</dbReference>
<evidence type="ECO:0000250" key="1">
    <source>
        <dbReference type="UniProtKB" id="Q1XH05"/>
    </source>
</evidence>
<evidence type="ECO:0000250" key="2">
    <source>
        <dbReference type="UniProtKB" id="Q75I94"/>
    </source>
</evidence>
<evidence type="ECO:0000250" key="3">
    <source>
        <dbReference type="UniProtKB" id="Q7XSK0"/>
    </source>
</evidence>
<evidence type="ECO:0000250" key="4">
    <source>
        <dbReference type="UniProtKB" id="Q9SPP9"/>
    </source>
</evidence>
<evidence type="ECO:0000255" key="5"/>
<evidence type="ECO:0000255" key="6">
    <source>
        <dbReference type="PROSITE-ProRule" id="PRU00498"/>
    </source>
</evidence>
<evidence type="ECO:0000303" key="7">
    <source>
    </source>
</evidence>
<evidence type="ECO:0000305" key="8"/>
<name>BGL25_ORYSJ</name>
<accession>Q0DA21</accession>
<accession>B7EF46</accession>
<feature type="signal peptide" evidence="5">
    <location>
        <begin position="1"/>
        <end position="19"/>
    </location>
</feature>
<feature type="chain" id="PRO_0000390342" description="Beta-glucosidase 25">
    <location>
        <begin position="20"/>
        <end position="501"/>
    </location>
</feature>
<feature type="active site" description="Proton donor" evidence="3">
    <location>
        <position position="186"/>
    </location>
</feature>
<feature type="active site" description="Nucleophile" evidence="3">
    <location>
        <position position="402"/>
    </location>
</feature>
<feature type="binding site" evidence="3">
    <location>
        <position position="39"/>
    </location>
    <ligand>
        <name>a beta-D-glucoside</name>
        <dbReference type="ChEBI" id="CHEBI:22798"/>
    </ligand>
</feature>
<feature type="binding site" evidence="3">
    <location>
        <position position="140"/>
    </location>
    <ligand>
        <name>a beta-D-glucoside</name>
        <dbReference type="ChEBI" id="CHEBI:22798"/>
    </ligand>
</feature>
<feature type="binding site" evidence="3">
    <location>
        <begin position="185"/>
        <end position="186"/>
    </location>
    <ligand>
        <name>a beta-D-glucoside</name>
        <dbReference type="ChEBI" id="CHEBI:22798"/>
    </ligand>
</feature>
<feature type="binding site" evidence="3">
    <location>
        <position position="329"/>
    </location>
    <ligand>
        <name>a beta-D-glucoside</name>
        <dbReference type="ChEBI" id="CHEBI:22798"/>
    </ligand>
</feature>
<feature type="binding site" evidence="4">
    <location>
        <position position="402"/>
    </location>
    <ligand>
        <name>a beta-D-glucoside</name>
        <dbReference type="ChEBI" id="CHEBI:22798"/>
    </ligand>
</feature>
<feature type="binding site" evidence="3">
    <location>
        <position position="452"/>
    </location>
    <ligand>
        <name>a beta-D-glucoside</name>
        <dbReference type="ChEBI" id="CHEBI:22798"/>
    </ligand>
</feature>
<feature type="binding site" evidence="3">
    <location>
        <begin position="459"/>
        <end position="460"/>
    </location>
    <ligand>
        <name>a beta-D-glucoside</name>
        <dbReference type="ChEBI" id="CHEBI:22798"/>
    </ligand>
</feature>
<feature type="binding site" evidence="1">
    <location>
        <position position="468"/>
    </location>
    <ligand>
        <name>a beta-D-glucoside</name>
        <dbReference type="ChEBI" id="CHEBI:22798"/>
    </ligand>
</feature>
<feature type="glycosylation site" description="N-linked (GlcNAc...) asparagine" evidence="6">
    <location>
        <position position="107"/>
    </location>
</feature>
<feature type="glycosylation site" description="N-linked (GlcNAc...) asparagine" evidence="6">
    <location>
        <position position="478"/>
    </location>
</feature>
<feature type="disulfide bond" evidence="3">
    <location>
        <begin position="205"/>
        <end position="213"/>
    </location>
</feature>
<feature type="splice variant" id="VSP_038508" description="In isoform 2." evidence="7">
    <location>
        <begin position="1"/>
        <end position="86"/>
    </location>
</feature>
<feature type="splice variant" id="VSP_038509" description="In isoform 2." evidence="7">
    <original>GDRLPQFSTH</original>
    <variation>ETIDCGSGNL</variation>
    <location>
        <begin position="303"/>
        <end position="312"/>
    </location>
</feature>
<feature type="splice variant" id="VSP_038510" description="In isoform 2." evidence="7">
    <location>
        <begin position="313"/>
        <end position="501"/>
    </location>
</feature>
<proteinExistence type="evidence at transcript level"/>
<sequence length="501" mass="57191">MSLLTLVHILVSFSACVEAISRADFPPGFIFGTASSAYQYEGAVNEGQRGPTIWDTLTKRPGRVIDFSNADVAVDHYHRYKEDVELMNDIGMDAYRFSISWSRIFPNGTGEPNEEGLSYYNSLIDALLDKGIEPYVTLFHWDLPQALEDRYGGWLNSEIIEDFVQYAFTCFKEFGDRVKHWITFNEPYNFAIDGYDLGIQAPGRCSILSHVFCREGKSSTEPYIVAHNILLAHAGAFRAYEQHFKNEQGGLIGIALNSRWYEPFSNADEDTEAAARAMDFELGWFLDPLMFGHYPPSMQKLAGDRLPQFSTHASKLVSGSLDFVGINHYTTLYARNDRLRIRKLVMDDASTDSAVIPTAYRHGKKIGETAASSWLHIVPWGMFKLMKHVKEKYGNPPVVITENGMDDANHPFSRLEDVLQDDKRIQYHNDYMSNLLDAIRKEGCNVHGYFVWSLLDNWEWNSGYTVRFGLYYIDYKNNLTRIPKASVQWFSQVLAQKTAII</sequence>
<gene>
    <name type="primary">BGLU25</name>
    <name type="ordered locus">Os06g0683300</name>
    <name type="ordered locus">LOC_Os06g46940</name>
</gene>